<accession>P38875</accession>
<accession>D3DLD6</accession>
<name>GPI16_YEAST</name>
<gene>
    <name type="primary">GPI16</name>
    <name type="ordered locus">YHR188C</name>
</gene>
<organism>
    <name type="scientific">Saccharomyces cerevisiae (strain ATCC 204508 / S288c)</name>
    <name type="common">Baker's yeast</name>
    <dbReference type="NCBI Taxonomy" id="559292"/>
    <lineage>
        <taxon>Eukaryota</taxon>
        <taxon>Fungi</taxon>
        <taxon>Dikarya</taxon>
        <taxon>Ascomycota</taxon>
        <taxon>Saccharomycotina</taxon>
        <taxon>Saccharomycetes</taxon>
        <taxon>Saccharomycetales</taxon>
        <taxon>Saccharomycetaceae</taxon>
        <taxon>Saccharomyces</taxon>
    </lineage>
</organism>
<feature type="signal peptide" evidence="2">
    <location>
        <begin position="1"/>
        <end position="19"/>
    </location>
</feature>
<feature type="chain" id="PRO_0000024110" description="GPI transamidase component GPI16">
    <location>
        <begin position="20"/>
        <end position="610"/>
    </location>
</feature>
<feature type="topological domain" description="Lumenal" evidence="2">
    <location>
        <begin position="20"/>
        <end position="551"/>
    </location>
</feature>
<feature type="transmembrane region" description="Helical" evidence="2">
    <location>
        <begin position="552"/>
        <end position="572"/>
    </location>
</feature>
<feature type="topological domain" description="Cytoplasmic" evidence="2">
    <location>
        <begin position="573"/>
        <end position="610"/>
    </location>
</feature>
<feature type="glycosylation site" description="N-linked (GlcNAc...) asparagine" evidence="4">
    <location>
        <position position="184"/>
    </location>
</feature>
<feature type="disulfide bond" description="Interchain (with C-85 in GPI8)" evidence="1">
    <location>
        <position position="202"/>
    </location>
</feature>
<evidence type="ECO:0000250" key="1"/>
<evidence type="ECO:0000255" key="2"/>
<evidence type="ECO:0000269" key="3">
    <source>
    </source>
</evidence>
<evidence type="ECO:0000269" key="4">
    <source>
    </source>
</evidence>
<evidence type="ECO:0000269" key="5">
    <source>
    </source>
</evidence>
<evidence type="ECO:0000305" key="6"/>
<reference key="1">
    <citation type="journal article" date="1994" name="Science">
        <title>Complete nucleotide sequence of Saccharomyces cerevisiae chromosome VIII.</title>
        <authorList>
            <person name="Johnston M."/>
            <person name="Andrews S."/>
            <person name="Brinkman R."/>
            <person name="Cooper J."/>
            <person name="Ding H."/>
            <person name="Dover J."/>
            <person name="Du Z."/>
            <person name="Favello A."/>
            <person name="Fulton L."/>
            <person name="Gattung S."/>
            <person name="Geisel C."/>
            <person name="Kirsten J."/>
            <person name="Kucaba T."/>
            <person name="Hillier L.W."/>
            <person name="Jier M."/>
            <person name="Johnston L."/>
            <person name="Langston Y."/>
            <person name="Latreille P."/>
            <person name="Louis E.J."/>
            <person name="Macri C."/>
            <person name="Mardis E."/>
            <person name="Menezes S."/>
            <person name="Mouser L."/>
            <person name="Nhan M."/>
            <person name="Rifkin L."/>
            <person name="Riles L."/>
            <person name="St Peter H."/>
            <person name="Trevaskis E."/>
            <person name="Vaughan K."/>
            <person name="Vignati D."/>
            <person name="Wilcox L."/>
            <person name="Wohldman P."/>
            <person name="Waterston R."/>
            <person name="Wilson R."/>
            <person name="Vaudin M."/>
        </authorList>
    </citation>
    <scope>NUCLEOTIDE SEQUENCE [LARGE SCALE GENOMIC DNA]</scope>
    <source>
        <strain>ATCC 204508 / S288c</strain>
    </source>
</reference>
<reference key="2">
    <citation type="journal article" date="2014" name="G3 (Bethesda)">
        <title>The reference genome sequence of Saccharomyces cerevisiae: Then and now.</title>
        <authorList>
            <person name="Engel S.R."/>
            <person name="Dietrich F.S."/>
            <person name="Fisk D.G."/>
            <person name="Binkley G."/>
            <person name="Balakrishnan R."/>
            <person name="Costanzo M.C."/>
            <person name="Dwight S.S."/>
            <person name="Hitz B.C."/>
            <person name="Karra K."/>
            <person name="Nash R.S."/>
            <person name="Weng S."/>
            <person name="Wong E.D."/>
            <person name="Lloyd P."/>
            <person name="Skrzypek M.S."/>
            <person name="Miyasato S.R."/>
            <person name="Simison M."/>
            <person name="Cherry J.M."/>
        </authorList>
    </citation>
    <scope>GENOME REANNOTATION</scope>
    <source>
        <strain>ATCC 204508 / S288c</strain>
    </source>
</reference>
<reference key="3">
    <citation type="journal article" date="2001" name="EMBO J.">
        <title>PIG-S and PIG-T, essential for GPI anchor attachment to proteins, form a complex with GAA1 and GPI8.</title>
        <authorList>
            <person name="Ohishi K."/>
            <person name="Inoue N."/>
            <person name="Kinoshita T."/>
        </authorList>
    </citation>
    <scope>FUNCTION</scope>
</reference>
<reference key="4">
    <citation type="journal article" date="2001" name="Mol. Biol. Cell">
        <title>The GPI transamidase complex of Saccharomyces cerevisiae contains Gaa1p, Gpi8p, and Gpi16p.</title>
        <authorList>
            <person name="Fraering P."/>
            <person name="Imhof I."/>
            <person name="Meyer U."/>
            <person name="Strub J.-M."/>
            <person name="van Dorsselaer A."/>
            <person name="Vionnet C."/>
            <person name="Conzelmann A."/>
        </authorList>
    </citation>
    <scope>FUNCTION</scope>
    <scope>SUBUNIT</scope>
    <scope>SUBCELLULAR LOCATION</scope>
    <scope>GLYCOSYLATION</scope>
</reference>
<reference key="5">
    <citation type="journal article" date="2003" name="Nature">
        <title>Global analysis of protein expression in yeast.</title>
        <authorList>
            <person name="Ghaemmaghami S."/>
            <person name="Huh W.-K."/>
            <person name="Bower K."/>
            <person name="Howson R.W."/>
            <person name="Belle A."/>
            <person name="Dephoure N."/>
            <person name="O'Shea E.K."/>
            <person name="Weissman J.S."/>
        </authorList>
    </citation>
    <scope>LEVEL OF PROTEIN EXPRESSION [LARGE SCALE ANALYSIS]</scope>
</reference>
<proteinExistence type="evidence at protein level"/>
<comment type="function">
    <text evidence="3 4">Component of the GPI transamidase complex. Involved in transfer of GPI to proteins.</text>
</comment>
<comment type="pathway">
    <text>Glycolipid biosynthesis; glycosylphosphatidylinositol-anchor biosynthesis.</text>
</comment>
<comment type="subunit">
    <text evidence="4">Forms a complex with CDC91, GPI17, GPI8 and GAA1.</text>
</comment>
<comment type="interaction">
    <interactant intactId="EBI-24869">
        <id>P38875</id>
    </interactant>
    <interactant intactId="EBI-7252">
        <id>P39012</id>
        <label>GAA1</label>
    </interactant>
    <organismsDiffer>false</organismsDiffer>
    <experiments>5</experiments>
</comment>
<comment type="interaction">
    <interactant intactId="EBI-24869">
        <id>P38875</id>
    </interactant>
    <interactant intactId="EBI-7777">
        <id>Q04080</id>
        <label>GPI17</label>
    </interactant>
    <organismsDiffer>false</organismsDiffer>
    <experiments>3</experiments>
</comment>
<comment type="interaction">
    <interactant intactId="EBI-24869">
        <id>P38875</id>
    </interactant>
    <interactant intactId="EBI-7822">
        <id>P49018</id>
        <label>GPI8</label>
    </interactant>
    <organismsDiffer>false</organismsDiffer>
    <experiments>4</experiments>
</comment>
<comment type="subcellular location">
    <subcellularLocation>
        <location evidence="4">Endoplasmic reticulum membrane</location>
        <topology evidence="4">Single-pass type I membrane protein</topology>
    </subcellularLocation>
</comment>
<comment type="PTM">
    <text evidence="1">The disulfide bond between GPI8 and GPI16 is important for normal enzyme activity.</text>
</comment>
<comment type="miscellaneous">
    <text evidence="5">Present with 1680 molecules/cell in log phase SD medium.</text>
</comment>
<comment type="similarity">
    <text evidence="6">Belongs to the PIGT family.</text>
</comment>
<comment type="caution">
    <text evidence="6">It is uncertain whether Met-1 or Met-9 is the initiator.</text>
</comment>
<comment type="sequence caution" evidence="6">
    <conflict type="erroneous initiation">
        <sequence resource="EMBL-CDS" id="AAB68365"/>
    </conflict>
</comment>
<keyword id="KW-1015">Disulfide bond</keyword>
<keyword id="KW-0256">Endoplasmic reticulum</keyword>
<keyword id="KW-0325">Glycoprotein</keyword>
<keyword id="KW-0337">GPI-anchor biosynthesis</keyword>
<keyword id="KW-0472">Membrane</keyword>
<keyword id="KW-1185">Reference proteome</keyword>
<keyword id="KW-0732">Signal</keyword>
<keyword id="KW-0812">Transmembrane</keyword>
<keyword id="KW-1133">Transmembrane helix</keyword>
<protein>
    <recommendedName>
        <fullName>GPI transamidase component GPI16</fullName>
    </recommendedName>
</protein>
<dbReference type="EMBL" id="U00030">
    <property type="protein sequence ID" value="AAB68365.1"/>
    <property type="status" value="ALT_INIT"/>
    <property type="molecule type" value="Genomic_DNA"/>
</dbReference>
<dbReference type="EMBL" id="BK006934">
    <property type="protein sequence ID" value="DAA06880.1"/>
    <property type="molecule type" value="Genomic_DNA"/>
</dbReference>
<dbReference type="PIR" id="S46687">
    <property type="entry name" value="S46687"/>
</dbReference>
<dbReference type="RefSeq" id="NP_012058.1">
    <property type="nucleotide sequence ID" value="NM_001179319.1"/>
</dbReference>
<dbReference type="SMR" id="P38875"/>
<dbReference type="BioGRID" id="36622">
    <property type="interactions" value="533"/>
</dbReference>
<dbReference type="ComplexPortal" id="CPX-1275">
    <property type="entry name" value="GPI-anchor transamidase complex"/>
</dbReference>
<dbReference type="DIP" id="DIP-1888N"/>
<dbReference type="FunCoup" id="P38875">
    <property type="interactions" value="668"/>
</dbReference>
<dbReference type="IntAct" id="P38875">
    <property type="interactions" value="20"/>
</dbReference>
<dbReference type="MINT" id="P38875"/>
<dbReference type="STRING" id="4932.YHR188C"/>
<dbReference type="GlyCosmos" id="P38875">
    <property type="glycosylation" value="1 site, No reported glycans"/>
</dbReference>
<dbReference type="GlyGen" id="P38875">
    <property type="glycosylation" value="1 site"/>
</dbReference>
<dbReference type="iPTMnet" id="P38875"/>
<dbReference type="PaxDb" id="4932-YHR188C"/>
<dbReference type="PeptideAtlas" id="P38875"/>
<dbReference type="EnsemblFungi" id="YHR188C_mRNA">
    <property type="protein sequence ID" value="YHR188C"/>
    <property type="gene ID" value="YHR188C"/>
</dbReference>
<dbReference type="GeneID" id="856595"/>
<dbReference type="KEGG" id="sce:YHR188C"/>
<dbReference type="AGR" id="SGD:S000001231"/>
<dbReference type="SGD" id="S000001231">
    <property type="gene designation" value="GPI16"/>
</dbReference>
<dbReference type="VEuPathDB" id="FungiDB:YHR188C"/>
<dbReference type="eggNOG" id="KOG2407">
    <property type="taxonomic scope" value="Eukaryota"/>
</dbReference>
<dbReference type="GeneTree" id="ENSGT00390000018558"/>
<dbReference type="HOGENOM" id="CLU_021459_2_1_1"/>
<dbReference type="InParanoid" id="P38875"/>
<dbReference type="OMA" id="NHGHYIG"/>
<dbReference type="OrthoDB" id="331263at2759"/>
<dbReference type="BioCyc" id="YEAST:YHR188C-MONOMER"/>
<dbReference type="UniPathway" id="UPA00196"/>
<dbReference type="BioGRID-ORCS" id="856595">
    <property type="hits" value="0 hits in 10 CRISPR screens"/>
</dbReference>
<dbReference type="PRO" id="PR:P38875"/>
<dbReference type="Proteomes" id="UP000002311">
    <property type="component" value="Chromosome VIII"/>
</dbReference>
<dbReference type="RNAct" id="P38875">
    <property type="molecule type" value="protein"/>
</dbReference>
<dbReference type="GO" id="GO:0005783">
    <property type="term" value="C:endoplasmic reticulum"/>
    <property type="evidence" value="ECO:0007005"/>
    <property type="project" value="SGD"/>
</dbReference>
<dbReference type="GO" id="GO:0005789">
    <property type="term" value="C:endoplasmic reticulum membrane"/>
    <property type="evidence" value="ECO:0000314"/>
    <property type="project" value="SGD"/>
</dbReference>
<dbReference type="GO" id="GO:0042765">
    <property type="term" value="C:GPI-anchor transamidase complex"/>
    <property type="evidence" value="ECO:0000314"/>
    <property type="project" value="SGD"/>
</dbReference>
<dbReference type="GO" id="GO:0016255">
    <property type="term" value="P:attachment of GPI anchor to protein"/>
    <property type="evidence" value="ECO:0000315"/>
    <property type="project" value="UniProtKB"/>
</dbReference>
<dbReference type="GO" id="GO:0031505">
    <property type="term" value="P:fungal-type cell wall organization"/>
    <property type="evidence" value="ECO:0000303"/>
    <property type="project" value="ComplexPortal"/>
</dbReference>
<dbReference type="GO" id="GO:0006506">
    <property type="term" value="P:GPI anchor biosynthetic process"/>
    <property type="evidence" value="ECO:0007669"/>
    <property type="project" value="UniProtKB-UniPathway"/>
</dbReference>
<dbReference type="InterPro" id="IPR007245">
    <property type="entry name" value="PIG-T"/>
</dbReference>
<dbReference type="PANTHER" id="PTHR12959:SF11">
    <property type="entry name" value="GPI TRANSAMIDASE COMPONENT PIG-T"/>
    <property type="match status" value="1"/>
</dbReference>
<dbReference type="PANTHER" id="PTHR12959">
    <property type="entry name" value="GPI TRANSAMIDASE COMPONENT PIG-T-RELATED"/>
    <property type="match status" value="1"/>
</dbReference>
<dbReference type="Pfam" id="PF04113">
    <property type="entry name" value="Gpi16"/>
    <property type="match status" value="1"/>
</dbReference>
<sequence>MILTLAYFMLGTLLLGVFAEDTVSQIGINDSLWYPYDEALVLKPLPNNDLLLSFAFQLQSEPFDPAVSSMSYDAYEHYTTFPRAIPPLLESTATRQFHLRFTRGFWDALSWGQLPHAGKEAGASGVELWSQVQAMDQEQAFHNWKKLSNSLSGLFCSSLNFIDESRTTFPRRSYASDIGAPLFNSTEKLYLMRASLPNEPICTENLTPFIKLLPTRGKSGLTSLLDGHKLFDSLWNSISLDIATICSEDEDALCHYEMDARIEMVTHVPSALARGERPIPKPLDGNTLRCDTDKPFDSYQCFPLPEPSQTHFKLSQLFARPINNGNLFANRPTRICAEVDRSTWTAFLSVDDTIFSTHDNCFDLSNDQNEGGSGYDFILESTDTTKVTPIVPVPIHVSRSLTGNGQDRGGMRIVFHNDNDTPVKLIYFESLPWFMRVYLSSLQITSTTSPQLQENDIILDKYYLQAADRKRPGHLEFTMLIPANTDIVMTYQFDKALLQFAEYPPDANHGFEIDAAVITVLSLESSSSLYEMRTSTLLLSLSTPDFSMPYNVIILTSTIMGLIFGMLYNLMVKRMVTVEEADKITLQSGLKYKLLKLKEKFLGKKKTKTD</sequence>